<accession>B1L9U1</accession>
<keyword id="KW-0032">Aminotransferase</keyword>
<keyword id="KW-0808">Transferase</keyword>
<evidence type="ECO:0000255" key="1">
    <source>
        <dbReference type="HAMAP-Rule" id="MF_00259"/>
    </source>
</evidence>
<protein>
    <recommendedName>
        <fullName evidence="1">Aminomethyltransferase</fullName>
        <ecNumber evidence="1">2.1.2.10</ecNumber>
    </recommendedName>
    <alternativeName>
        <fullName evidence="1">Glycine cleavage system T protein</fullName>
    </alternativeName>
</protein>
<gene>
    <name evidence="1" type="primary">gcvT</name>
    <name type="ordered locus">TRQ2_0737</name>
</gene>
<comment type="function">
    <text evidence="1">The glycine cleavage system catalyzes the degradation of glycine.</text>
</comment>
<comment type="catalytic activity">
    <reaction evidence="1">
        <text>N(6)-[(R)-S(8)-aminomethyldihydrolipoyl]-L-lysyl-[protein] + (6S)-5,6,7,8-tetrahydrofolate = N(6)-[(R)-dihydrolipoyl]-L-lysyl-[protein] + (6R)-5,10-methylene-5,6,7,8-tetrahydrofolate + NH4(+)</text>
        <dbReference type="Rhea" id="RHEA:16945"/>
        <dbReference type="Rhea" id="RHEA-COMP:10475"/>
        <dbReference type="Rhea" id="RHEA-COMP:10492"/>
        <dbReference type="ChEBI" id="CHEBI:15636"/>
        <dbReference type="ChEBI" id="CHEBI:28938"/>
        <dbReference type="ChEBI" id="CHEBI:57453"/>
        <dbReference type="ChEBI" id="CHEBI:83100"/>
        <dbReference type="ChEBI" id="CHEBI:83143"/>
        <dbReference type="EC" id="2.1.2.10"/>
    </reaction>
</comment>
<comment type="subunit">
    <text evidence="1">The glycine cleavage system is composed of four proteins: P, T, L and H.</text>
</comment>
<comment type="similarity">
    <text evidence="1">Belongs to the GcvT family.</text>
</comment>
<organism>
    <name type="scientific">Thermotoga sp. (strain RQ2)</name>
    <dbReference type="NCBI Taxonomy" id="126740"/>
    <lineage>
        <taxon>Bacteria</taxon>
        <taxon>Thermotogati</taxon>
        <taxon>Thermotogota</taxon>
        <taxon>Thermotogae</taxon>
        <taxon>Thermotogales</taxon>
        <taxon>Thermotogaceae</taxon>
        <taxon>Thermotoga</taxon>
    </lineage>
</organism>
<feature type="chain" id="PRO_1000114124" description="Aminomethyltransferase">
    <location>
        <begin position="1"/>
        <end position="364"/>
    </location>
</feature>
<proteinExistence type="inferred from homology"/>
<reference key="1">
    <citation type="journal article" date="2011" name="J. Bacteriol.">
        <title>Genome sequence of Thermotoga sp. strain RQ2, a hyperthermophilic bacterium isolated from a geothermally heated region of the seafloor near Ribeira Quente, the Azores.</title>
        <authorList>
            <person name="Swithers K.S."/>
            <person name="DiPippo J.L."/>
            <person name="Bruce D.C."/>
            <person name="Detter C."/>
            <person name="Tapia R."/>
            <person name="Han S."/>
            <person name="Saunders E."/>
            <person name="Goodwin L.A."/>
            <person name="Han J."/>
            <person name="Woyke T."/>
            <person name="Pitluck S."/>
            <person name="Pennacchio L."/>
            <person name="Nolan M."/>
            <person name="Mikhailova N."/>
            <person name="Lykidis A."/>
            <person name="Land M.L."/>
            <person name="Brettin T."/>
            <person name="Stetter K.O."/>
            <person name="Nelson K.E."/>
            <person name="Gogarten J.P."/>
            <person name="Noll K.M."/>
        </authorList>
    </citation>
    <scope>NUCLEOTIDE SEQUENCE [LARGE SCALE GENOMIC DNA]</scope>
    <source>
        <strain>RQ2</strain>
    </source>
</reference>
<name>GCST_THESQ</name>
<dbReference type="EC" id="2.1.2.10" evidence="1"/>
<dbReference type="EMBL" id="CP000969">
    <property type="protein sequence ID" value="ACB09089.1"/>
    <property type="molecule type" value="Genomic_DNA"/>
</dbReference>
<dbReference type="RefSeq" id="WP_012310714.1">
    <property type="nucleotide sequence ID" value="NC_010483.1"/>
</dbReference>
<dbReference type="SMR" id="B1L9U1"/>
<dbReference type="KEGG" id="trq:TRQ2_0737"/>
<dbReference type="HOGENOM" id="CLU_007884_10_2_0"/>
<dbReference type="Proteomes" id="UP000001687">
    <property type="component" value="Chromosome"/>
</dbReference>
<dbReference type="GO" id="GO:0005829">
    <property type="term" value="C:cytosol"/>
    <property type="evidence" value="ECO:0007669"/>
    <property type="project" value="TreeGrafter"/>
</dbReference>
<dbReference type="GO" id="GO:0005960">
    <property type="term" value="C:glycine cleavage complex"/>
    <property type="evidence" value="ECO:0007669"/>
    <property type="project" value="InterPro"/>
</dbReference>
<dbReference type="GO" id="GO:0004047">
    <property type="term" value="F:aminomethyltransferase activity"/>
    <property type="evidence" value="ECO:0007669"/>
    <property type="project" value="UniProtKB-UniRule"/>
</dbReference>
<dbReference type="GO" id="GO:0008483">
    <property type="term" value="F:transaminase activity"/>
    <property type="evidence" value="ECO:0007669"/>
    <property type="project" value="UniProtKB-KW"/>
</dbReference>
<dbReference type="GO" id="GO:0019464">
    <property type="term" value="P:glycine decarboxylation via glycine cleavage system"/>
    <property type="evidence" value="ECO:0007669"/>
    <property type="project" value="UniProtKB-UniRule"/>
</dbReference>
<dbReference type="FunFam" id="2.40.30.110:FF:000003">
    <property type="entry name" value="Aminomethyltransferase"/>
    <property type="match status" value="1"/>
</dbReference>
<dbReference type="FunFam" id="3.30.70.1400:FF:000001">
    <property type="entry name" value="Aminomethyltransferase"/>
    <property type="match status" value="1"/>
</dbReference>
<dbReference type="FunFam" id="4.10.1250.10:FF:000001">
    <property type="entry name" value="Aminomethyltransferase"/>
    <property type="match status" value="1"/>
</dbReference>
<dbReference type="Gene3D" id="2.40.30.110">
    <property type="entry name" value="Aminomethyltransferase beta-barrel domains"/>
    <property type="match status" value="1"/>
</dbReference>
<dbReference type="Gene3D" id="3.30.70.1400">
    <property type="entry name" value="Aminomethyltransferase beta-barrel domains"/>
    <property type="match status" value="1"/>
</dbReference>
<dbReference type="Gene3D" id="4.10.1250.10">
    <property type="entry name" value="Aminomethyltransferase fragment"/>
    <property type="match status" value="1"/>
</dbReference>
<dbReference type="Gene3D" id="3.30.1360.120">
    <property type="entry name" value="Probable tRNA modification gtpase trme, domain 1"/>
    <property type="match status" value="1"/>
</dbReference>
<dbReference type="HAMAP" id="MF_00259">
    <property type="entry name" value="GcvT"/>
    <property type="match status" value="1"/>
</dbReference>
<dbReference type="InterPro" id="IPR006223">
    <property type="entry name" value="GCS_T"/>
</dbReference>
<dbReference type="InterPro" id="IPR022903">
    <property type="entry name" value="GCS_T_bac"/>
</dbReference>
<dbReference type="InterPro" id="IPR013977">
    <property type="entry name" value="GCST_C"/>
</dbReference>
<dbReference type="InterPro" id="IPR006222">
    <property type="entry name" value="GCV_T_N"/>
</dbReference>
<dbReference type="InterPro" id="IPR028896">
    <property type="entry name" value="GcvT/YgfZ/DmdA"/>
</dbReference>
<dbReference type="InterPro" id="IPR029043">
    <property type="entry name" value="GcvT/YgfZ_C"/>
</dbReference>
<dbReference type="InterPro" id="IPR027266">
    <property type="entry name" value="TrmE/GcvT_dom1"/>
</dbReference>
<dbReference type="NCBIfam" id="TIGR00528">
    <property type="entry name" value="gcvT"/>
    <property type="match status" value="1"/>
</dbReference>
<dbReference type="NCBIfam" id="NF001567">
    <property type="entry name" value="PRK00389.1"/>
    <property type="match status" value="1"/>
</dbReference>
<dbReference type="PANTHER" id="PTHR43757">
    <property type="entry name" value="AMINOMETHYLTRANSFERASE"/>
    <property type="match status" value="1"/>
</dbReference>
<dbReference type="PANTHER" id="PTHR43757:SF2">
    <property type="entry name" value="AMINOMETHYLTRANSFERASE, MITOCHONDRIAL"/>
    <property type="match status" value="1"/>
</dbReference>
<dbReference type="Pfam" id="PF01571">
    <property type="entry name" value="GCV_T"/>
    <property type="match status" value="1"/>
</dbReference>
<dbReference type="Pfam" id="PF08669">
    <property type="entry name" value="GCV_T_C"/>
    <property type="match status" value="1"/>
</dbReference>
<dbReference type="PIRSF" id="PIRSF006487">
    <property type="entry name" value="GcvT"/>
    <property type="match status" value="1"/>
</dbReference>
<dbReference type="SUPFAM" id="SSF101790">
    <property type="entry name" value="Aminomethyltransferase beta-barrel domain"/>
    <property type="match status" value="1"/>
</dbReference>
<dbReference type="SUPFAM" id="SSF103025">
    <property type="entry name" value="Folate-binding domain"/>
    <property type="match status" value="1"/>
</dbReference>
<sequence length="364" mass="40291">MKRTPLFEKHVELGAKMVDFAGWEMPLYYTSIFEEVMAVRKSVGMFDVSHMGEFLVKGPEAVSFIDFLITNNFSSLPDGKALYSVMCNENGGIIDDLVVYKVSPDEALMVVNAANIEKDFNWIKSHSKNFNVEVSNISDTTALIAFQGPRAQEALQELVEDSLEEIAYYSFKKSIVAGVEAIVSRTGYTGEDGFELMIEAKNSPKVWDALMNLLRKIDGRPAGLGARDVCRLEATYLLYGQDMDENTNPFEVGLSWVVKLDKDFVGKEALLKAKEKVERKLVALELSGKRIARKGYEVSKNGERVGEITSGNFSPTLGKSIALALVSKSVKIGDQLGVVFPGGKLVEALVVKKPFYRGSVRREV</sequence>